<proteinExistence type="evidence at transcript level"/>
<evidence type="ECO:0000250" key="1"/>
<evidence type="ECO:0000255" key="2"/>
<evidence type="ECO:0000303" key="3">
    <source>
    </source>
</evidence>
<evidence type="ECO:0000305" key="4"/>
<organism>
    <name type="scientific">Arabidopsis thaliana</name>
    <name type="common">Mouse-ear cress</name>
    <dbReference type="NCBI Taxonomy" id="3702"/>
    <lineage>
        <taxon>Eukaryota</taxon>
        <taxon>Viridiplantae</taxon>
        <taxon>Streptophyta</taxon>
        <taxon>Embryophyta</taxon>
        <taxon>Tracheophyta</taxon>
        <taxon>Spermatophyta</taxon>
        <taxon>Magnoliopsida</taxon>
        <taxon>eudicotyledons</taxon>
        <taxon>Gunneridae</taxon>
        <taxon>Pentapetalae</taxon>
        <taxon>rosids</taxon>
        <taxon>malvids</taxon>
        <taxon>Brassicales</taxon>
        <taxon>Brassicaceae</taxon>
        <taxon>Camelineae</taxon>
        <taxon>Arabidopsis</taxon>
    </lineage>
</organism>
<name>PHSB_ARATH</name>
<dbReference type="EMBL" id="AC079041">
    <property type="protein sequence ID" value="AAG50709.1"/>
    <property type="molecule type" value="Genomic_DNA"/>
</dbReference>
<dbReference type="EMBL" id="CP002684">
    <property type="protein sequence ID" value="AEE31400.1"/>
    <property type="molecule type" value="Genomic_DNA"/>
</dbReference>
<dbReference type="EMBL" id="CP002684">
    <property type="protein sequence ID" value="AEE31401.1"/>
    <property type="molecule type" value="Genomic_DNA"/>
</dbReference>
<dbReference type="EMBL" id="AK317082">
    <property type="protein sequence ID" value="BAH19774.1"/>
    <property type="molecule type" value="mRNA"/>
</dbReference>
<dbReference type="EMBL" id="BT030375">
    <property type="protein sequence ID" value="ABO38788.1"/>
    <property type="molecule type" value="mRNA"/>
</dbReference>
<dbReference type="PIR" id="D86442">
    <property type="entry name" value="D86442"/>
</dbReference>
<dbReference type="RefSeq" id="NP_174466.1">
    <molecule id="Q9C6S5-1"/>
    <property type="nucleotide sequence ID" value="NM_102920.3"/>
</dbReference>
<dbReference type="RefSeq" id="NP_973947.1">
    <molecule id="Q9C6S5-2"/>
    <property type="nucleotide sequence ID" value="NM_202218.3"/>
</dbReference>
<dbReference type="SMR" id="Q9C6S5"/>
<dbReference type="BioGRID" id="25307">
    <property type="interactions" value="1"/>
</dbReference>
<dbReference type="FunCoup" id="Q9C6S5">
    <property type="interactions" value="375"/>
</dbReference>
<dbReference type="IntAct" id="Q9C6S5">
    <property type="interactions" value="1"/>
</dbReference>
<dbReference type="STRING" id="3702.Q9C6S5"/>
<dbReference type="PaxDb" id="3702-AT1G31830.1"/>
<dbReference type="ProteomicsDB" id="236156">
    <molecule id="Q9C6S5-1"/>
</dbReference>
<dbReference type="EnsemblPlants" id="AT1G31830.1">
    <molecule id="Q9C6S5-1"/>
    <property type="protein sequence ID" value="AT1G31830.1"/>
    <property type="gene ID" value="AT1G31830"/>
</dbReference>
<dbReference type="EnsemblPlants" id="AT1G31830.2">
    <molecule id="Q9C6S5-2"/>
    <property type="protein sequence ID" value="AT1G31830.2"/>
    <property type="gene ID" value="AT1G31830"/>
</dbReference>
<dbReference type="GeneID" id="840073"/>
<dbReference type="Gramene" id="AT1G31830.1">
    <molecule id="Q9C6S5-1"/>
    <property type="protein sequence ID" value="AT1G31830.1"/>
    <property type="gene ID" value="AT1G31830"/>
</dbReference>
<dbReference type="Gramene" id="AT1G31830.2">
    <molecule id="Q9C6S5-2"/>
    <property type="protein sequence ID" value="AT1G31830.2"/>
    <property type="gene ID" value="AT1G31830"/>
</dbReference>
<dbReference type="KEGG" id="ath:AT1G31830"/>
<dbReference type="Araport" id="AT1G31830"/>
<dbReference type="TAIR" id="AT1G31830">
    <property type="gene designation" value="PUT2"/>
</dbReference>
<dbReference type="eggNOG" id="KOG1287">
    <property type="taxonomic scope" value="Eukaryota"/>
</dbReference>
<dbReference type="InParanoid" id="Q9C6S5"/>
<dbReference type="PhylomeDB" id="Q9C6S5"/>
<dbReference type="PRO" id="PR:Q9C6S5"/>
<dbReference type="Proteomes" id="UP000006548">
    <property type="component" value="Chromosome 1"/>
</dbReference>
<dbReference type="ExpressionAtlas" id="Q9C6S5">
    <property type="expression patterns" value="baseline and differential"/>
</dbReference>
<dbReference type="GO" id="GO:0009507">
    <property type="term" value="C:chloroplast"/>
    <property type="evidence" value="ECO:0000314"/>
    <property type="project" value="TAIR"/>
</dbReference>
<dbReference type="GO" id="GO:0005886">
    <property type="term" value="C:plasma membrane"/>
    <property type="evidence" value="ECO:0007669"/>
    <property type="project" value="UniProtKB-SubCell"/>
</dbReference>
<dbReference type="GO" id="GO:0015203">
    <property type="term" value="F:polyamine transmembrane transporter activity"/>
    <property type="evidence" value="ECO:0000314"/>
    <property type="project" value="TAIR"/>
</dbReference>
<dbReference type="GO" id="GO:0015293">
    <property type="term" value="F:symporter activity"/>
    <property type="evidence" value="ECO:0007669"/>
    <property type="project" value="UniProtKB-KW"/>
</dbReference>
<dbReference type="GO" id="GO:0015846">
    <property type="term" value="P:polyamine transport"/>
    <property type="evidence" value="ECO:0000314"/>
    <property type="project" value="TAIR"/>
</dbReference>
<dbReference type="FunFam" id="1.20.1740.10:FF:000041">
    <property type="entry name" value="Amino acid permease, putative"/>
    <property type="match status" value="1"/>
</dbReference>
<dbReference type="Gene3D" id="1.20.1740.10">
    <property type="entry name" value="Amino acid/polyamine transporter I"/>
    <property type="match status" value="1"/>
</dbReference>
<dbReference type="InterPro" id="IPR002293">
    <property type="entry name" value="AA/rel_permease1"/>
</dbReference>
<dbReference type="InterPro" id="IPR044566">
    <property type="entry name" value="RMV1-like"/>
</dbReference>
<dbReference type="PANTHER" id="PTHR45826:SF2">
    <property type="entry name" value="AMINO ACID TRANSPORTER"/>
    <property type="match status" value="1"/>
</dbReference>
<dbReference type="PANTHER" id="PTHR45826">
    <property type="entry name" value="POLYAMINE TRANSPORTER PUT1"/>
    <property type="match status" value="1"/>
</dbReference>
<dbReference type="Pfam" id="PF13520">
    <property type="entry name" value="AA_permease_2"/>
    <property type="match status" value="1"/>
</dbReference>
<dbReference type="PIRSF" id="PIRSF006060">
    <property type="entry name" value="AA_transporter"/>
    <property type="match status" value="1"/>
</dbReference>
<reference key="1">
    <citation type="journal article" date="2000" name="Nature">
        <title>Sequence and analysis of chromosome 1 of the plant Arabidopsis thaliana.</title>
        <authorList>
            <person name="Theologis A."/>
            <person name="Ecker J.R."/>
            <person name="Palm C.J."/>
            <person name="Federspiel N.A."/>
            <person name="Kaul S."/>
            <person name="White O."/>
            <person name="Alonso J."/>
            <person name="Altafi H."/>
            <person name="Araujo R."/>
            <person name="Bowman C.L."/>
            <person name="Brooks S.Y."/>
            <person name="Buehler E."/>
            <person name="Chan A."/>
            <person name="Chao Q."/>
            <person name="Chen H."/>
            <person name="Cheuk R.F."/>
            <person name="Chin C.W."/>
            <person name="Chung M.K."/>
            <person name="Conn L."/>
            <person name="Conway A.B."/>
            <person name="Conway A.R."/>
            <person name="Creasy T.H."/>
            <person name="Dewar K."/>
            <person name="Dunn P."/>
            <person name="Etgu P."/>
            <person name="Feldblyum T.V."/>
            <person name="Feng J.-D."/>
            <person name="Fong B."/>
            <person name="Fujii C.Y."/>
            <person name="Gill J.E."/>
            <person name="Goldsmith A.D."/>
            <person name="Haas B."/>
            <person name="Hansen N.F."/>
            <person name="Hughes B."/>
            <person name="Huizar L."/>
            <person name="Hunter J.L."/>
            <person name="Jenkins J."/>
            <person name="Johnson-Hopson C."/>
            <person name="Khan S."/>
            <person name="Khaykin E."/>
            <person name="Kim C.J."/>
            <person name="Koo H.L."/>
            <person name="Kremenetskaia I."/>
            <person name="Kurtz D.B."/>
            <person name="Kwan A."/>
            <person name="Lam B."/>
            <person name="Langin-Hooper S."/>
            <person name="Lee A."/>
            <person name="Lee J.M."/>
            <person name="Lenz C.A."/>
            <person name="Li J.H."/>
            <person name="Li Y.-P."/>
            <person name="Lin X."/>
            <person name="Liu S.X."/>
            <person name="Liu Z.A."/>
            <person name="Luros J.S."/>
            <person name="Maiti R."/>
            <person name="Marziali A."/>
            <person name="Militscher J."/>
            <person name="Miranda M."/>
            <person name="Nguyen M."/>
            <person name="Nierman W.C."/>
            <person name="Osborne B.I."/>
            <person name="Pai G."/>
            <person name="Peterson J."/>
            <person name="Pham P.K."/>
            <person name="Rizzo M."/>
            <person name="Rooney T."/>
            <person name="Rowley D."/>
            <person name="Sakano H."/>
            <person name="Salzberg S.L."/>
            <person name="Schwartz J.R."/>
            <person name="Shinn P."/>
            <person name="Southwick A.M."/>
            <person name="Sun H."/>
            <person name="Tallon L.J."/>
            <person name="Tambunga G."/>
            <person name="Toriumi M.J."/>
            <person name="Town C.D."/>
            <person name="Utterback T."/>
            <person name="Van Aken S."/>
            <person name="Vaysberg M."/>
            <person name="Vysotskaia V.S."/>
            <person name="Walker M."/>
            <person name="Wu D."/>
            <person name="Yu G."/>
            <person name="Fraser C.M."/>
            <person name="Venter J.C."/>
            <person name="Davis R.W."/>
        </authorList>
    </citation>
    <scope>NUCLEOTIDE SEQUENCE [LARGE SCALE GENOMIC DNA]</scope>
    <source>
        <strain>cv. Columbia</strain>
    </source>
</reference>
<reference key="2">
    <citation type="journal article" date="2017" name="Plant J.">
        <title>Araport11: a complete reannotation of the Arabidopsis thaliana reference genome.</title>
        <authorList>
            <person name="Cheng C.Y."/>
            <person name="Krishnakumar V."/>
            <person name="Chan A.P."/>
            <person name="Thibaud-Nissen F."/>
            <person name="Schobel S."/>
            <person name="Town C.D."/>
        </authorList>
    </citation>
    <scope>GENOME REANNOTATION</scope>
    <source>
        <strain>cv. Columbia</strain>
    </source>
</reference>
<reference key="3">
    <citation type="journal article" date="2009" name="DNA Res.">
        <title>Analysis of multiple occurrences of alternative splicing events in Arabidopsis thaliana using novel sequenced full-length cDNAs.</title>
        <authorList>
            <person name="Iida K."/>
            <person name="Fukami-Kobayashi K."/>
            <person name="Toyoda A."/>
            <person name="Sakaki Y."/>
            <person name="Kobayashi M."/>
            <person name="Seki M."/>
            <person name="Shinozaki K."/>
        </authorList>
    </citation>
    <scope>NUCLEOTIDE SEQUENCE [LARGE SCALE MRNA] (ISOFORM 2)</scope>
    <source>
        <strain>cv. Columbia</strain>
        <tissue>Rosette leaf</tissue>
    </source>
</reference>
<reference key="4">
    <citation type="submission" date="2007-03" db="EMBL/GenBank/DDBJ databases">
        <title>Arabidopsis ORF clones.</title>
        <authorList>
            <person name="Bautista V.R."/>
            <person name="Kim C.J."/>
            <person name="Chen H."/>
            <person name="Wu S.Y."/>
            <person name="De Los Reyes C."/>
            <person name="Ecker J.R."/>
        </authorList>
    </citation>
    <scope>NUCLEOTIDE SEQUENCE [LARGE SCALE MRNA] (ISOFORM 1)</scope>
    <source>
        <strain>cv. Columbia</strain>
    </source>
</reference>
<comment type="function">
    <text evidence="1">Probable cell membrane polyamine/proton symporter involved in the polyamine uptake in cells.</text>
</comment>
<comment type="subcellular location">
    <subcellularLocation>
        <location evidence="1">Cell membrane</location>
        <topology evidence="4">Multi-pass membrane protein</topology>
    </subcellularLocation>
</comment>
<comment type="alternative products">
    <event type="alternative splicing"/>
    <isoform>
        <id>Q9C6S5-1</id>
        <name>1</name>
        <sequence type="displayed"/>
    </isoform>
    <isoform>
        <id>Q9C6S5-2</id>
        <name>2</name>
        <sequence type="described" ref="VSP_044089"/>
    </isoform>
</comment>
<comment type="similarity">
    <text evidence="4">Belongs to the amino acid-polyamine-organocation (APC) superfamily. Polyamine:cation symporter (PHS) (TC 2.A.3.12) family.</text>
</comment>
<accession>Q9C6S5</accession>
<accession>Q3ED40</accession>
<feature type="chain" id="PRO_0000418909" description="Probable polyamine transporter At1g31830">
    <location>
        <begin position="1"/>
        <end position="495"/>
    </location>
</feature>
<feature type="transmembrane region" description="Helical" evidence="2">
    <location>
        <begin position="49"/>
        <end position="69"/>
    </location>
</feature>
<feature type="transmembrane region" description="Helical" evidence="2">
    <location>
        <begin position="79"/>
        <end position="99"/>
    </location>
</feature>
<feature type="transmembrane region" description="Helical" evidence="2">
    <location>
        <begin position="112"/>
        <end position="132"/>
    </location>
</feature>
<feature type="transmembrane region" description="Helical" evidence="2">
    <location>
        <begin position="156"/>
        <end position="176"/>
    </location>
</feature>
<feature type="transmembrane region" description="Helical" evidence="2">
    <location>
        <begin position="186"/>
        <end position="206"/>
    </location>
</feature>
<feature type="transmembrane region" description="Helical" evidence="2">
    <location>
        <begin position="230"/>
        <end position="250"/>
    </location>
</feature>
<feature type="transmembrane region" description="Helical" evidence="2">
    <location>
        <begin position="267"/>
        <end position="287"/>
    </location>
</feature>
<feature type="transmembrane region" description="Helical" evidence="2">
    <location>
        <begin position="357"/>
        <end position="377"/>
    </location>
</feature>
<feature type="transmembrane region" description="Helical" evidence="2">
    <location>
        <begin position="380"/>
        <end position="400"/>
    </location>
</feature>
<feature type="transmembrane region" description="Helical" evidence="2">
    <location>
        <begin position="417"/>
        <end position="437"/>
    </location>
</feature>
<feature type="transmembrane region" description="Helical" evidence="2">
    <location>
        <begin position="442"/>
        <end position="462"/>
    </location>
</feature>
<feature type="splice variant" id="VSP_044089" description="In isoform 2." evidence="3">
    <location>
        <begin position="1"/>
        <end position="16"/>
    </location>
</feature>
<sequence>MQKRRIITVNPSASIEMSQYENNEVPYSSVGADEVPSSPPKATDKIRKVSMLPLVFLIFYEVSGGPFGVEDSVNAAGPLLALLGFVIFPFIWSIPEALITAEMGTMYPENGGYVVWVSSALGPFWGFQQGWMKWLSGVIDNALYPVLFLDYLKSGVPALGSGLPRVASILVLTILLTYLNYRGLTIVGWVAVLMGVFSILPFAVMGLISIPQLEPSRWLVMDLGNVNWNLYLNTLFWNLNYWDSISTLAGEVENPNHTLPKALFYGVILVACSYIFPLLAGIGAIPLEREKWTDGYFSDVAKALGGAWLRWWVQAAAATSNMGMFIAEMSSDSFQLLGMAERGMLPEFFAKRSRYGTPLLGILFSASGVVLLSWLSFQEIVAAENLLYCVGMILEFIAFVRMRMKHPAASRPYKIPIGTTGSILMCIPPTILICAVVALSSLKVAAVSIVMMIIGFLIHPLLNHMDRKRWVKFSISSDLPDLQQQTREYEETLIR</sequence>
<protein>
    <recommendedName>
        <fullName>Probable polyamine transporter At1g31830</fullName>
    </recommendedName>
</protein>
<keyword id="KW-0025">Alternative splicing</keyword>
<keyword id="KW-1003">Cell membrane</keyword>
<keyword id="KW-0472">Membrane</keyword>
<keyword id="KW-1185">Reference proteome</keyword>
<keyword id="KW-0769">Symport</keyword>
<keyword id="KW-0812">Transmembrane</keyword>
<keyword id="KW-1133">Transmembrane helix</keyword>
<keyword id="KW-0813">Transport</keyword>
<gene>
    <name type="ordered locus">At1g31830</name>
    <name type="ORF">F5M6.16</name>
</gene>